<reference key="1">
    <citation type="journal article" date="2006" name="Environ. Microbiol.">
        <title>Whole genome analysis of the marine Bacteroidetes'Gramella forsetii' reveals adaptations to degradation of polymeric organic matter.</title>
        <authorList>
            <person name="Bauer M."/>
            <person name="Kube M."/>
            <person name="Teeling H."/>
            <person name="Richter M."/>
            <person name="Lombardot T."/>
            <person name="Allers E."/>
            <person name="Wuerdemann C.A."/>
            <person name="Quast C."/>
            <person name="Kuhl H."/>
            <person name="Knaust F."/>
            <person name="Woebken D."/>
            <person name="Bischof K."/>
            <person name="Mussmann M."/>
            <person name="Choudhuri J.V."/>
            <person name="Meyer F."/>
            <person name="Reinhardt R."/>
            <person name="Amann R.I."/>
            <person name="Gloeckner F.O."/>
        </authorList>
    </citation>
    <scope>NUCLEOTIDE SEQUENCE [LARGE SCALE GENOMIC DNA]</scope>
    <source>
        <strain>DSM 17595 / CGMCC 1.15422 / KT0803</strain>
    </source>
</reference>
<protein>
    <recommendedName>
        <fullName evidence="1">Glucose-6-phosphate isomerase</fullName>
        <shortName evidence="1">GPI</shortName>
        <ecNumber evidence="1">5.3.1.9</ecNumber>
    </recommendedName>
    <alternativeName>
        <fullName evidence="1">Phosphoglucose isomerase</fullName>
        <shortName evidence="1">PGI</shortName>
    </alternativeName>
    <alternativeName>
        <fullName evidence="1">Phosphohexose isomerase</fullName>
        <shortName evidence="1">PHI</shortName>
    </alternativeName>
</protein>
<keyword id="KW-0963">Cytoplasm</keyword>
<keyword id="KW-0312">Gluconeogenesis</keyword>
<keyword id="KW-0324">Glycolysis</keyword>
<keyword id="KW-0413">Isomerase</keyword>
<name>G6PI_CHRFK</name>
<proteinExistence type="inferred from homology"/>
<dbReference type="EC" id="5.3.1.9" evidence="1"/>
<dbReference type="EMBL" id="CU207366">
    <property type="protein sequence ID" value="CAL68110.1"/>
    <property type="molecule type" value="Genomic_DNA"/>
</dbReference>
<dbReference type="RefSeq" id="WP_011711011.1">
    <property type="nucleotide sequence ID" value="NC_008571.1"/>
</dbReference>
<dbReference type="SMR" id="A0M665"/>
<dbReference type="STRING" id="411154.GFO_3166"/>
<dbReference type="KEGG" id="gfo:GFO_3166"/>
<dbReference type="eggNOG" id="COG0166">
    <property type="taxonomic scope" value="Bacteria"/>
</dbReference>
<dbReference type="HOGENOM" id="CLU_017947_3_1_10"/>
<dbReference type="OrthoDB" id="140919at2"/>
<dbReference type="UniPathway" id="UPA00109">
    <property type="reaction ID" value="UER00181"/>
</dbReference>
<dbReference type="UniPathway" id="UPA00138"/>
<dbReference type="Proteomes" id="UP000000755">
    <property type="component" value="Chromosome"/>
</dbReference>
<dbReference type="GO" id="GO:0005829">
    <property type="term" value="C:cytosol"/>
    <property type="evidence" value="ECO:0007669"/>
    <property type="project" value="TreeGrafter"/>
</dbReference>
<dbReference type="GO" id="GO:0097367">
    <property type="term" value="F:carbohydrate derivative binding"/>
    <property type="evidence" value="ECO:0007669"/>
    <property type="project" value="InterPro"/>
</dbReference>
<dbReference type="GO" id="GO:0004347">
    <property type="term" value="F:glucose-6-phosphate isomerase activity"/>
    <property type="evidence" value="ECO:0007669"/>
    <property type="project" value="UniProtKB-UniRule"/>
</dbReference>
<dbReference type="GO" id="GO:0048029">
    <property type="term" value="F:monosaccharide binding"/>
    <property type="evidence" value="ECO:0007669"/>
    <property type="project" value="TreeGrafter"/>
</dbReference>
<dbReference type="GO" id="GO:0006094">
    <property type="term" value="P:gluconeogenesis"/>
    <property type="evidence" value="ECO:0007669"/>
    <property type="project" value="UniProtKB-UniRule"/>
</dbReference>
<dbReference type="GO" id="GO:0051156">
    <property type="term" value="P:glucose 6-phosphate metabolic process"/>
    <property type="evidence" value="ECO:0007669"/>
    <property type="project" value="TreeGrafter"/>
</dbReference>
<dbReference type="GO" id="GO:0006096">
    <property type="term" value="P:glycolytic process"/>
    <property type="evidence" value="ECO:0007669"/>
    <property type="project" value="UniProtKB-UniRule"/>
</dbReference>
<dbReference type="CDD" id="cd05015">
    <property type="entry name" value="SIS_PGI_1"/>
    <property type="match status" value="1"/>
</dbReference>
<dbReference type="CDD" id="cd05016">
    <property type="entry name" value="SIS_PGI_2"/>
    <property type="match status" value="1"/>
</dbReference>
<dbReference type="FunFam" id="3.40.50.10490:FF:000004">
    <property type="entry name" value="Glucose-6-phosphate isomerase"/>
    <property type="match status" value="1"/>
</dbReference>
<dbReference type="Gene3D" id="1.10.1390.10">
    <property type="match status" value="1"/>
</dbReference>
<dbReference type="Gene3D" id="3.40.50.10490">
    <property type="entry name" value="Glucose-6-phosphate isomerase like protein, domain 1"/>
    <property type="match status" value="2"/>
</dbReference>
<dbReference type="HAMAP" id="MF_00473">
    <property type="entry name" value="G6P_isomerase"/>
    <property type="match status" value="1"/>
</dbReference>
<dbReference type="InterPro" id="IPR001672">
    <property type="entry name" value="G6P_Isomerase"/>
</dbReference>
<dbReference type="InterPro" id="IPR023096">
    <property type="entry name" value="G6P_Isomerase_C"/>
</dbReference>
<dbReference type="InterPro" id="IPR018189">
    <property type="entry name" value="Phosphoglucose_isomerase_CS"/>
</dbReference>
<dbReference type="InterPro" id="IPR046348">
    <property type="entry name" value="SIS_dom_sf"/>
</dbReference>
<dbReference type="InterPro" id="IPR035476">
    <property type="entry name" value="SIS_PGI_1"/>
</dbReference>
<dbReference type="InterPro" id="IPR035482">
    <property type="entry name" value="SIS_PGI_2"/>
</dbReference>
<dbReference type="NCBIfam" id="NF001211">
    <property type="entry name" value="PRK00179.1"/>
    <property type="match status" value="1"/>
</dbReference>
<dbReference type="PANTHER" id="PTHR11469">
    <property type="entry name" value="GLUCOSE-6-PHOSPHATE ISOMERASE"/>
    <property type="match status" value="1"/>
</dbReference>
<dbReference type="PANTHER" id="PTHR11469:SF1">
    <property type="entry name" value="GLUCOSE-6-PHOSPHATE ISOMERASE"/>
    <property type="match status" value="1"/>
</dbReference>
<dbReference type="Pfam" id="PF00342">
    <property type="entry name" value="PGI"/>
    <property type="match status" value="1"/>
</dbReference>
<dbReference type="PRINTS" id="PR00662">
    <property type="entry name" value="G6PISOMERASE"/>
</dbReference>
<dbReference type="SUPFAM" id="SSF53697">
    <property type="entry name" value="SIS domain"/>
    <property type="match status" value="1"/>
</dbReference>
<dbReference type="PROSITE" id="PS00765">
    <property type="entry name" value="P_GLUCOSE_ISOMERASE_1"/>
    <property type="match status" value="1"/>
</dbReference>
<dbReference type="PROSITE" id="PS00174">
    <property type="entry name" value="P_GLUCOSE_ISOMERASE_2"/>
    <property type="match status" value="1"/>
</dbReference>
<dbReference type="PROSITE" id="PS51463">
    <property type="entry name" value="P_GLUCOSE_ISOMERASE_3"/>
    <property type="match status" value="1"/>
</dbReference>
<accession>A0M665</accession>
<gene>
    <name evidence="1" type="primary">pgi</name>
    <name type="ordered locus">GFO_3166</name>
</gene>
<evidence type="ECO:0000255" key="1">
    <source>
        <dbReference type="HAMAP-Rule" id="MF_00473"/>
    </source>
</evidence>
<comment type="function">
    <text evidence="1">Catalyzes the reversible isomerization of glucose-6-phosphate to fructose-6-phosphate.</text>
</comment>
<comment type="catalytic activity">
    <reaction evidence="1">
        <text>alpha-D-glucose 6-phosphate = beta-D-fructose 6-phosphate</text>
        <dbReference type="Rhea" id="RHEA:11816"/>
        <dbReference type="ChEBI" id="CHEBI:57634"/>
        <dbReference type="ChEBI" id="CHEBI:58225"/>
        <dbReference type="EC" id="5.3.1.9"/>
    </reaction>
</comment>
<comment type="pathway">
    <text evidence="1">Carbohydrate biosynthesis; gluconeogenesis.</text>
</comment>
<comment type="pathway">
    <text evidence="1">Carbohydrate degradation; glycolysis; D-glyceraldehyde 3-phosphate and glycerone phosphate from D-glucose: step 2/4.</text>
</comment>
<comment type="subcellular location">
    <subcellularLocation>
        <location evidence="1">Cytoplasm</location>
    </subcellularLocation>
</comment>
<comment type="similarity">
    <text evidence="1">Belongs to the GPI family.</text>
</comment>
<feature type="chain" id="PRO_1000013971" description="Glucose-6-phosphate isomerase">
    <location>
        <begin position="1"/>
        <end position="543"/>
    </location>
</feature>
<feature type="active site" description="Proton donor" evidence="1">
    <location>
        <position position="353"/>
    </location>
</feature>
<feature type="active site" evidence="1">
    <location>
        <position position="384"/>
    </location>
</feature>
<feature type="active site" evidence="1">
    <location>
        <position position="512"/>
    </location>
</feature>
<sequence length="543" mass="62173">MKNINPTTTKAWKELEDHYKEIKNEHMKDMFNNDEKRSEKFTIQWEDFYVDYSKNRITEDTRALLLQLAEECHLKDAINSYFGGEAINQTENRPVLHTALRANKDADIKVSNKNVVPEVQEVKAKIRDFSNDIIDGTQKGYTGKAFTDIVNIGIGGSDLGPVMVTESLEFYKNHLKVHFISNVDGDHVHETIKDLNPETTLFLIVSKTFTTMETLSNATTVREWFLKSAPQKEVSKHFVAVSTNLQQVEDFGIDVKNIFPMWDWVGGRFSLWSAVGLSISLAIGYENFESLLDGARKMDDHFKETSFEENLPVQLALISIWYNNFFKAESEAVIPYSQYLDKFPSYLQQAIMESNGKSVDRNGEKVDYQTGTIIWGEPGTNSQHAFFQLIHQGTKLIPTDFIGFKHSLFEDKDHQDKLMANYFAQTEALLNGKTEQEVEGELKSKAFSQEEIDRIKAFKVFEGNNPTNTILIEKLTPESMGKLIALYEHKIFVQGVIWNIFSYDQWGVELGKQLANKILAEFSSKTTDNHDSSTKKLLKFYMS</sequence>
<organism>
    <name type="scientific">Christiangramia forsetii (strain DSM 17595 / CGMCC 1.15422 / KT0803)</name>
    <name type="common">Gramella forsetii</name>
    <dbReference type="NCBI Taxonomy" id="411154"/>
    <lineage>
        <taxon>Bacteria</taxon>
        <taxon>Pseudomonadati</taxon>
        <taxon>Bacteroidota</taxon>
        <taxon>Flavobacteriia</taxon>
        <taxon>Flavobacteriales</taxon>
        <taxon>Flavobacteriaceae</taxon>
        <taxon>Christiangramia</taxon>
    </lineage>
</organism>